<name>KXD1_YEAS7</name>
<dbReference type="EMBL" id="AAFW02000099">
    <property type="protein sequence ID" value="EDN62038.1"/>
    <property type="molecule type" value="Genomic_DNA"/>
</dbReference>
<dbReference type="SMR" id="A6ZUA0"/>
<dbReference type="HOGENOM" id="CLU_099155_0_0_1"/>
<dbReference type="Proteomes" id="UP000007060">
    <property type="component" value="Unassembled WGS sequence"/>
</dbReference>
<dbReference type="GO" id="GO:0031083">
    <property type="term" value="C:BLOC-1 complex"/>
    <property type="evidence" value="ECO:0007669"/>
    <property type="project" value="TreeGrafter"/>
</dbReference>
<dbReference type="GO" id="GO:0005768">
    <property type="term" value="C:endosome"/>
    <property type="evidence" value="ECO:0007669"/>
    <property type="project" value="UniProtKB-SubCell"/>
</dbReference>
<dbReference type="GO" id="GO:0007032">
    <property type="term" value="P:endosome organization"/>
    <property type="evidence" value="ECO:0007669"/>
    <property type="project" value="TreeGrafter"/>
</dbReference>
<dbReference type="GO" id="GO:0032880">
    <property type="term" value="P:regulation of protein localization"/>
    <property type="evidence" value="ECO:0007669"/>
    <property type="project" value="TreeGrafter"/>
</dbReference>
<dbReference type="InterPro" id="IPR051390">
    <property type="entry name" value="BLOC-1_subunit_KXD1"/>
</dbReference>
<dbReference type="InterPro" id="IPR019371">
    <property type="entry name" value="KxDL_dom"/>
</dbReference>
<dbReference type="PANTHER" id="PTHR37787">
    <property type="entry name" value="BIOGENESIS OF LYSOSOME-RELATED ORGANELLES COMPLEX 1 SUBUNIT KXD1"/>
    <property type="match status" value="1"/>
</dbReference>
<dbReference type="PANTHER" id="PTHR37787:SF1">
    <property type="entry name" value="BIOGENESIS OF LYSOSOME-RELATED ORGANELLES COMPLEX 1 SUBUNIT KXD1"/>
    <property type="match status" value="1"/>
</dbReference>
<dbReference type="Pfam" id="PF10241">
    <property type="entry name" value="KxDL"/>
    <property type="match status" value="1"/>
</dbReference>
<organism>
    <name type="scientific">Saccharomyces cerevisiae (strain YJM789)</name>
    <name type="common">Baker's yeast</name>
    <dbReference type="NCBI Taxonomy" id="307796"/>
    <lineage>
        <taxon>Eukaryota</taxon>
        <taxon>Fungi</taxon>
        <taxon>Dikarya</taxon>
        <taxon>Ascomycota</taxon>
        <taxon>Saccharomycotina</taxon>
        <taxon>Saccharomycetes</taxon>
        <taxon>Saccharomycetales</taxon>
        <taxon>Saccharomycetaceae</taxon>
        <taxon>Saccharomyces</taxon>
    </lineage>
</organism>
<evidence type="ECO:0000250" key="1"/>
<evidence type="ECO:0000255" key="2"/>
<evidence type="ECO:0000256" key="3">
    <source>
        <dbReference type="SAM" id="MobiDB-lite"/>
    </source>
</evidence>
<evidence type="ECO:0000305" key="4"/>
<feature type="chain" id="PRO_0000410672" description="Biogenesis of lysosome-related organelles complex 1 subunit KXD1">
    <location>
        <begin position="1"/>
        <end position="218"/>
    </location>
</feature>
<feature type="region of interest" description="Disordered" evidence="3">
    <location>
        <begin position="1"/>
        <end position="65"/>
    </location>
</feature>
<feature type="coiled-coil region" evidence="2">
    <location>
        <begin position="142"/>
        <end position="192"/>
    </location>
</feature>
<feature type="compositionally biased region" description="Polar residues" evidence="3">
    <location>
        <begin position="17"/>
        <end position="30"/>
    </location>
</feature>
<feature type="compositionally biased region" description="Low complexity" evidence="3">
    <location>
        <begin position="39"/>
        <end position="65"/>
    </location>
</feature>
<protein>
    <recommendedName>
        <fullName>Biogenesis of lysosome-related organelles complex 1 subunit KXD1</fullName>
        <shortName>BLOC-1 subunit KXD1</shortName>
    </recommendedName>
    <alternativeName>
        <fullName>KxDL homolog</fullName>
    </alternativeName>
</protein>
<sequence length="218" mass="24442">MVTGISEENDDEETFSAVHSSTPSINSQSYAIPITEEMSSSFHDSISTTSNSSGSFDSDGSNVSDVVEQNEMDNESNVDEDLFLDNDIPQSSNLLPTDAQDPGPIFDVSRYIFDSLKQSIDSADFSEALSLQTKTSAVINSKSLELKQYIDEMKSRLTQLQEKFENGEATSKKIKRDLETSRKNIDYLNAALRVDFPIEFNQAREKILERRLNEDHDC</sequence>
<proteinExistence type="inferred from homology"/>
<comment type="function">
    <text evidence="1">Component of the biogenesis of lysosome-related organelles complex-1 (BLOC-1) involved in endosomal cargo sorting.</text>
</comment>
<comment type="subunit">
    <text evidence="1">Component of the biogenesis of lysosome-related organelles complex-1 (BLOC-1) composed of at least BLI1, BLS1, CNL1, KXD1, SNN1 and VAB2.</text>
</comment>
<comment type="subcellular location">
    <subcellularLocation>
        <location evidence="1">Endosome</location>
    </subcellularLocation>
</comment>
<comment type="similarity">
    <text evidence="4">Belongs to the KXD1 family.</text>
</comment>
<keyword id="KW-0175">Coiled coil</keyword>
<keyword id="KW-0967">Endosome</keyword>
<keyword id="KW-0813">Transport</keyword>
<accession>A6ZUA0</accession>
<gene>
    <name type="primary">KXD1</name>
    <name type="ORF">SCY_1983</name>
</gene>
<reference key="1">
    <citation type="journal article" date="2007" name="Proc. Natl. Acad. Sci. U.S.A.">
        <title>Genome sequencing and comparative analysis of Saccharomyces cerevisiae strain YJM789.</title>
        <authorList>
            <person name="Wei W."/>
            <person name="McCusker J.H."/>
            <person name="Hyman R.W."/>
            <person name="Jones T."/>
            <person name="Ning Y."/>
            <person name="Cao Z."/>
            <person name="Gu Z."/>
            <person name="Bruno D."/>
            <person name="Miranda M."/>
            <person name="Nguyen M."/>
            <person name="Wilhelmy J."/>
            <person name="Komp C."/>
            <person name="Tamse R."/>
            <person name="Wang X."/>
            <person name="Jia P."/>
            <person name="Luedi P."/>
            <person name="Oefner P.J."/>
            <person name="David L."/>
            <person name="Dietrich F.S."/>
            <person name="Li Y."/>
            <person name="Davis R.W."/>
            <person name="Steinmetz L.M."/>
        </authorList>
    </citation>
    <scope>NUCLEOTIDE SEQUENCE [LARGE SCALE GENOMIC DNA]</scope>
    <source>
        <strain>YJM789</strain>
    </source>
</reference>